<protein>
    <recommendedName>
        <fullName evidence="1">Argininosuccinate lyase</fullName>
        <shortName evidence="1">ASAL</shortName>
        <ecNumber evidence="1">4.3.2.1</ecNumber>
    </recommendedName>
    <alternativeName>
        <fullName evidence="1">Arginosuccinase</fullName>
    </alternativeName>
</protein>
<proteinExistence type="inferred from homology"/>
<feature type="chain" id="PRO_0000137789" description="Argininosuccinate lyase">
    <location>
        <begin position="1"/>
        <end position="465"/>
    </location>
</feature>
<evidence type="ECO:0000255" key="1">
    <source>
        <dbReference type="HAMAP-Rule" id="MF_00006"/>
    </source>
</evidence>
<dbReference type="EC" id="4.3.2.1" evidence="1"/>
<dbReference type="EMBL" id="AE017282">
    <property type="protein sequence ID" value="AAU92468.1"/>
    <property type="molecule type" value="Genomic_DNA"/>
</dbReference>
<dbReference type="RefSeq" id="WP_010960531.1">
    <property type="nucleotide sequence ID" value="NC_002977.6"/>
</dbReference>
<dbReference type="SMR" id="Q609I6"/>
<dbReference type="STRING" id="243233.MCA1248"/>
<dbReference type="GeneID" id="88223533"/>
<dbReference type="KEGG" id="mca:MCA1248"/>
<dbReference type="eggNOG" id="COG0165">
    <property type="taxonomic scope" value="Bacteria"/>
</dbReference>
<dbReference type="HOGENOM" id="CLU_027272_2_3_6"/>
<dbReference type="UniPathway" id="UPA00068">
    <property type="reaction ID" value="UER00114"/>
</dbReference>
<dbReference type="Proteomes" id="UP000006821">
    <property type="component" value="Chromosome"/>
</dbReference>
<dbReference type="GO" id="GO:0005829">
    <property type="term" value="C:cytosol"/>
    <property type="evidence" value="ECO:0007669"/>
    <property type="project" value="TreeGrafter"/>
</dbReference>
<dbReference type="GO" id="GO:0004056">
    <property type="term" value="F:argininosuccinate lyase activity"/>
    <property type="evidence" value="ECO:0007669"/>
    <property type="project" value="UniProtKB-UniRule"/>
</dbReference>
<dbReference type="GO" id="GO:0042450">
    <property type="term" value="P:arginine biosynthetic process via ornithine"/>
    <property type="evidence" value="ECO:0007669"/>
    <property type="project" value="InterPro"/>
</dbReference>
<dbReference type="GO" id="GO:0006526">
    <property type="term" value="P:L-arginine biosynthetic process"/>
    <property type="evidence" value="ECO:0007669"/>
    <property type="project" value="UniProtKB-UniRule"/>
</dbReference>
<dbReference type="CDD" id="cd01359">
    <property type="entry name" value="Argininosuccinate_lyase"/>
    <property type="match status" value="1"/>
</dbReference>
<dbReference type="FunFam" id="1.10.275.10:FF:000002">
    <property type="entry name" value="Argininosuccinate lyase"/>
    <property type="match status" value="1"/>
</dbReference>
<dbReference type="FunFam" id="1.10.40.30:FF:000001">
    <property type="entry name" value="Argininosuccinate lyase"/>
    <property type="match status" value="1"/>
</dbReference>
<dbReference type="FunFam" id="1.20.200.10:FF:000015">
    <property type="entry name" value="argininosuccinate lyase isoform X2"/>
    <property type="match status" value="1"/>
</dbReference>
<dbReference type="Gene3D" id="1.10.40.30">
    <property type="entry name" value="Fumarase/aspartase (C-terminal domain)"/>
    <property type="match status" value="1"/>
</dbReference>
<dbReference type="Gene3D" id="1.20.200.10">
    <property type="entry name" value="Fumarase/aspartase (Central domain)"/>
    <property type="match status" value="1"/>
</dbReference>
<dbReference type="Gene3D" id="1.10.275.10">
    <property type="entry name" value="Fumarase/aspartase (N-terminal domain)"/>
    <property type="match status" value="1"/>
</dbReference>
<dbReference type="HAMAP" id="MF_00006">
    <property type="entry name" value="Arg_succ_lyase"/>
    <property type="match status" value="1"/>
</dbReference>
<dbReference type="InterPro" id="IPR029419">
    <property type="entry name" value="Arg_succ_lyase_C"/>
</dbReference>
<dbReference type="InterPro" id="IPR009049">
    <property type="entry name" value="Argininosuccinate_lyase"/>
</dbReference>
<dbReference type="InterPro" id="IPR024083">
    <property type="entry name" value="Fumarase/histidase_N"/>
</dbReference>
<dbReference type="InterPro" id="IPR020557">
    <property type="entry name" value="Fumarate_lyase_CS"/>
</dbReference>
<dbReference type="InterPro" id="IPR000362">
    <property type="entry name" value="Fumarate_lyase_fam"/>
</dbReference>
<dbReference type="InterPro" id="IPR022761">
    <property type="entry name" value="Fumarate_lyase_N"/>
</dbReference>
<dbReference type="InterPro" id="IPR008948">
    <property type="entry name" value="L-Aspartase-like"/>
</dbReference>
<dbReference type="NCBIfam" id="TIGR00838">
    <property type="entry name" value="argH"/>
    <property type="match status" value="1"/>
</dbReference>
<dbReference type="PANTHER" id="PTHR43814">
    <property type="entry name" value="ARGININOSUCCINATE LYASE"/>
    <property type="match status" value="1"/>
</dbReference>
<dbReference type="PANTHER" id="PTHR43814:SF1">
    <property type="entry name" value="ARGININOSUCCINATE LYASE"/>
    <property type="match status" value="1"/>
</dbReference>
<dbReference type="Pfam" id="PF14698">
    <property type="entry name" value="ASL_C2"/>
    <property type="match status" value="1"/>
</dbReference>
<dbReference type="Pfam" id="PF00206">
    <property type="entry name" value="Lyase_1"/>
    <property type="match status" value="1"/>
</dbReference>
<dbReference type="PRINTS" id="PR00145">
    <property type="entry name" value="ARGSUCLYASE"/>
</dbReference>
<dbReference type="PRINTS" id="PR00149">
    <property type="entry name" value="FUMRATELYASE"/>
</dbReference>
<dbReference type="SUPFAM" id="SSF48557">
    <property type="entry name" value="L-aspartase-like"/>
    <property type="match status" value="1"/>
</dbReference>
<dbReference type="PROSITE" id="PS00163">
    <property type="entry name" value="FUMARATE_LYASES"/>
    <property type="match status" value="1"/>
</dbReference>
<reference key="1">
    <citation type="journal article" date="2004" name="PLoS Biol.">
        <title>Genomic insights into methanotrophy: the complete genome sequence of Methylococcus capsulatus (Bath).</title>
        <authorList>
            <person name="Ward N.L."/>
            <person name="Larsen O."/>
            <person name="Sakwa J."/>
            <person name="Bruseth L."/>
            <person name="Khouri H.M."/>
            <person name="Durkin A.S."/>
            <person name="Dimitrov G."/>
            <person name="Jiang L."/>
            <person name="Scanlan D."/>
            <person name="Kang K.H."/>
            <person name="Lewis M.R."/>
            <person name="Nelson K.E."/>
            <person name="Methe B.A."/>
            <person name="Wu M."/>
            <person name="Heidelberg J.F."/>
            <person name="Paulsen I.T."/>
            <person name="Fouts D.E."/>
            <person name="Ravel J."/>
            <person name="Tettelin H."/>
            <person name="Ren Q."/>
            <person name="Read T.D."/>
            <person name="DeBoy R.T."/>
            <person name="Seshadri R."/>
            <person name="Salzberg S.L."/>
            <person name="Jensen H.B."/>
            <person name="Birkeland N.K."/>
            <person name="Nelson W.C."/>
            <person name="Dodson R.J."/>
            <person name="Grindhaug S.H."/>
            <person name="Holt I.E."/>
            <person name="Eidhammer I."/>
            <person name="Jonasen I."/>
            <person name="Vanaken S."/>
            <person name="Utterback T.R."/>
            <person name="Feldblyum T.V."/>
            <person name="Fraser C.M."/>
            <person name="Lillehaug J.R."/>
            <person name="Eisen J.A."/>
        </authorList>
    </citation>
    <scope>NUCLEOTIDE SEQUENCE [LARGE SCALE GENOMIC DNA]</scope>
    <source>
        <strain>ATCC 33009 / NCIMB 11132 / Bath</strain>
    </source>
</reference>
<accession>Q609I6</accession>
<organism>
    <name type="scientific">Methylococcus capsulatus (strain ATCC 33009 / NCIMB 11132 / Bath)</name>
    <dbReference type="NCBI Taxonomy" id="243233"/>
    <lineage>
        <taxon>Bacteria</taxon>
        <taxon>Pseudomonadati</taxon>
        <taxon>Pseudomonadota</taxon>
        <taxon>Gammaproteobacteria</taxon>
        <taxon>Methylococcales</taxon>
        <taxon>Methylococcaceae</taxon>
        <taxon>Methylococcus</taxon>
    </lineage>
</organism>
<comment type="catalytic activity">
    <reaction evidence="1">
        <text>2-(N(omega)-L-arginino)succinate = fumarate + L-arginine</text>
        <dbReference type="Rhea" id="RHEA:24020"/>
        <dbReference type="ChEBI" id="CHEBI:29806"/>
        <dbReference type="ChEBI" id="CHEBI:32682"/>
        <dbReference type="ChEBI" id="CHEBI:57472"/>
        <dbReference type="EC" id="4.3.2.1"/>
    </reaction>
</comment>
<comment type="pathway">
    <text evidence="1">Amino-acid biosynthesis; L-arginine biosynthesis; L-arginine from L-ornithine and carbamoyl phosphate: step 3/3.</text>
</comment>
<comment type="subcellular location">
    <subcellularLocation>
        <location evidence="1">Cytoplasm</location>
    </subcellularLocation>
</comment>
<comment type="similarity">
    <text evidence="1">Belongs to the lyase 1 family. Argininosuccinate lyase subfamily.</text>
</comment>
<keyword id="KW-0028">Amino-acid biosynthesis</keyword>
<keyword id="KW-0055">Arginine biosynthesis</keyword>
<keyword id="KW-0963">Cytoplasm</keyword>
<keyword id="KW-0456">Lyase</keyword>
<keyword id="KW-1185">Reference proteome</keyword>
<gene>
    <name evidence="1" type="primary">argH</name>
    <name type="ordered locus">MCA1248</name>
</gene>
<name>ARLY_METCA</name>
<sequence length="465" mass="51231">MSIQQKLWGGRFEEATDAFVEAFTASVDFDKRLASHDIRGSIAHATMLERLGLLTREELQAIVSGLEAIGAEIEAGQFPWEVSLEDVHMNIEARLTQRIGEAGKKLHTGRSRNDQVATDVRLYLRTEIDRICGMILRLQTALVDLAEREAATIMPGFTHLQVAQPVTFGHHMMAWYEMLSRDYDRLRDCRKRVNVMPLGAAALAGSSFPLDRDYTAALLDFSGPAANSLDAVSDRDFAIEFAACASLVLMHLSRFSEELILWTSAQFGFIDLPDAFCTGSSIMPQKKNPDVPELIRGKSARVFGHLFALLTLMKSQPLAYNKDNQEDKEPLFDTVDTLSGCLRAFADMMPHVRPNRSAMYASARKGYATATDLADYLVRRGTPFRDAHEIVGKAVRLGMESSRDLADIPLEELRSLSSVIGPDVYQVLTLEGSVAARSHPGGTAPDCVKRAVAAARVRLAALQGS</sequence>